<keyword id="KW-0131">Cell cycle</keyword>
<keyword id="KW-0132">Cell division</keyword>
<keyword id="KW-0963">Cytoplasm</keyword>
<keyword id="KW-0238">DNA-binding</keyword>
<organism>
    <name type="scientific">Salmonella paratyphi A (strain ATCC 9150 / SARB42)</name>
    <dbReference type="NCBI Taxonomy" id="295319"/>
    <lineage>
        <taxon>Bacteria</taxon>
        <taxon>Pseudomonadati</taxon>
        <taxon>Pseudomonadota</taxon>
        <taxon>Gammaproteobacteria</taxon>
        <taxon>Enterobacterales</taxon>
        <taxon>Enterobacteriaceae</taxon>
        <taxon>Salmonella</taxon>
    </lineage>
</organism>
<accession>Q5PGD4</accession>
<reference key="1">
    <citation type="journal article" date="2004" name="Nat. Genet.">
        <title>Comparison of genome degradation in Paratyphi A and Typhi, human-restricted serovars of Salmonella enterica that cause typhoid.</title>
        <authorList>
            <person name="McClelland M."/>
            <person name="Sanderson K.E."/>
            <person name="Clifton S.W."/>
            <person name="Latreille P."/>
            <person name="Porwollik S."/>
            <person name="Sabo A."/>
            <person name="Meyer R."/>
            <person name="Bieri T."/>
            <person name="Ozersky P."/>
            <person name="McLellan M."/>
            <person name="Harkins C.R."/>
            <person name="Wang C."/>
            <person name="Nguyen C."/>
            <person name="Berghoff A."/>
            <person name="Elliott G."/>
            <person name="Kohlberg S."/>
            <person name="Strong C."/>
            <person name="Du F."/>
            <person name="Carter J."/>
            <person name="Kremizki C."/>
            <person name="Layman D."/>
            <person name="Leonard S."/>
            <person name="Sun H."/>
            <person name="Fulton L."/>
            <person name="Nash W."/>
            <person name="Miner T."/>
            <person name="Minx P."/>
            <person name="Delehaunty K."/>
            <person name="Fronick C."/>
            <person name="Magrini V."/>
            <person name="Nhan M."/>
            <person name="Warren W."/>
            <person name="Florea L."/>
            <person name="Spieth J."/>
            <person name="Wilson R.K."/>
        </authorList>
    </citation>
    <scope>NUCLEOTIDE SEQUENCE [LARGE SCALE GENOMIC DNA]</scope>
    <source>
        <strain>ATCC 9150 / SARB42</strain>
    </source>
</reference>
<evidence type="ECO:0000255" key="1">
    <source>
        <dbReference type="HAMAP-Rule" id="MF_01073"/>
    </source>
</evidence>
<feature type="chain" id="PRO_1000064635" description="Macrodomain Ter protein">
    <location>
        <begin position="1"/>
        <end position="150"/>
    </location>
</feature>
<proteinExistence type="inferred from homology"/>
<gene>
    <name evidence="1" type="primary">matP</name>
    <name type="ordered locus">SPA1781</name>
</gene>
<name>MATP_SALPA</name>
<comment type="function">
    <text evidence="1">Required for spatial organization of the terminus region of the chromosome (Ter macrodomain) during the cell cycle. Prevents early segregation of duplicated Ter macrodomains during cell division. Binds specifically to matS, which is a 13 bp signature motif repeated within the Ter macrodomain.</text>
</comment>
<comment type="subunit">
    <text evidence="1">Homodimer.</text>
</comment>
<comment type="subcellular location">
    <subcellularLocation>
        <location evidence="1">Cytoplasm</location>
    </subcellularLocation>
</comment>
<comment type="similarity">
    <text evidence="1">Belongs to the MatP family.</text>
</comment>
<dbReference type="EMBL" id="CP000026">
    <property type="protein sequence ID" value="AAV77697.1"/>
    <property type="molecule type" value="Genomic_DNA"/>
</dbReference>
<dbReference type="RefSeq" id="WP_000877172.1">
    <property type="nucleotide sequence ID" value="NC_006511.1"/>
</dbReference>
<dbReference type="SMR" id="Q5PGD4"/>
<dbReference type="KEGG" id="spt:SPA1781"/>
<dbReference type="HOGENOM" id="CLU_142157_0_0_6"/>
<dbReference type="Proteomes" id="UP000008185">
    <property type="component" value="Chromosome"/>
</dbReference>
<dbReference type="GO" id="GO:0005737">
    <property type="term" value="C:cytoplasm"/>
    <property type="evidence" value="ECO:0007669"/>
    <property type="project" value="UniProtKB-SubCell"/>
</dbReference>
<dbReference type="GO" id="GO:0043565">
    <property type="term" value="F:sequence-specific DNA binding"/>
    <property type="evidence" value="ECO:0007669"/>
    <property type="project" value="UniProtKB-UniRule"/>
</dbReference>
<dbReference type="GO" id="GO:0051301">
    <property type="term" value="P:cell division"/>
    <property type="evidence" value="ECO:0007669"/>
    <property type="project" value="UniProtKB-UniRule"/>
</dbReference>
<dbReference type="GO" id="GO:0006355">
    <property type="term" value="P:regulation of DNA-templated transcription"/>
    <property type="evidence" value="ECO:0007669"/>
    <property type="project" value="InterPro"/>
</dbReference>
<dbReference type="Gene3D" id="1.20.1270.380">
    <property type="entry name" value="MatP, N-terminal domain"/>
    <property type="match status" value="1"/>
</dbReference>
<dbReference type="Gene3D" id="1.10.1220.10">
    <property type="entry name" value="Met repressor-like"/>
    <property type="match status" value="1"/>
</dbReference>
<dbReference type="HAMAP" id="MF_01073">
    <property type="entry name" value="MatP"/>
    <property type="match status" value="1"/>
</dbReference>
<dbReference type="InterPro" id="IPR013321">
    <property type="entry name" value="Arc_rbn_hlx_hlx"/>
</dbReference>
<dbReference type="InterPro" id="IPR009390">
    <property type="entry name" value="MatP"/>
</dbReference>
<dbReference type="InterPro" id="IPR035375">
    <property type="entry name" value="MatP_C"/>
</dbReference>
<dbReference type="InterPro" id="IPR035087">
    <property type="entry name" value="MatP_N"/>
</dbReference>
<dbReference type="InterPro" id="IPR038339">
    <property type="entry name" value="MatP_N_sf"/>
</dbReference>
<dbReference type="NCBIfam" id="NF003471">
    <property type="entry name" value="PRK05097.1"/>
    <property type="match status" value="1"/>
</dbReference>
<dbReference type="Pfam" id="PF06303">
    <property type="entry name" value="MatP"/>
    <property type="match status" value="1"/>
</dbReference>
<dbReference type="Pfam" id="PF17414">
    <property type="entry name" value="MatP_C"/>
    <property type="match status" value="1"/>
</dbReference>
<sequence length="150" mass="17801">MKYQQLENLESGWKWKYLVKKHREGELITRYVEASAAQEAVNLLLALENEPVRVNVWIDRHMNPALLNRMKQTIRARRKRHFNAEHQHTRKKSIDLEFMVWQRLAGLAQRRGKTLSETIVQLIEDAEHKEKYATQMTTLKQDLQALLGKK</sequence>
<protein>
    <recommendedName>
        <fullName evidence="1">Macrodomain Ter protein</fullName>
    </recommendedName>
</protein>